<reference key="1">
    <citation type="journal article" date="2002" name="Genome Res.">
        <title>A complete sequence of the T. tengcongensis genome.</title>
        <authorList>
            <person name="Bao Q."/>
            <person name="Tian Y."/>
            <person name="Li W."/>
            <person name="Xu Z."/>
            <person name="Xuan Z."/>
            <person name="Hu S."/>
            <person name="Dong W."/>
            <person name="Yang J."/>
            <person name="Chen Y."/>
            <person name="Xue Y."/>
            <person name="Xu Y."/>
            <person name="Lai X."/>
            <person name="Huang L."/>
            <person name="Dong X."/>
            <person name="Ma Y."/>
            <person name="Ling L."/>
            <person name="Tan H."/>
            <person name="Chen R."/>
            <person name="Wang J."/>
            <person name="Yu J."/>
            <person name="Yang H."/>
        </authorList>
    </citation>
    <scope>NUCLEOTIDE SEQUENCE [LARGE SCALE GENOMIC DNA]</scope>
    <source>
        <strain>DSM 15242 / JCM 11007 / NBRC 100824 / MB4</strain>
    </source>
</reference>
<gene>
    <name evidence="1" type="primary">rplM</name>
    <name type="ordered locus">TTE2257</name>
</gene>
<keyword id="KW-1185">Reference proteome</keyword>
<keyword id="KW-0687">Ribonucleoprotein</keyword>
<keyword id="KW-0689">Ribosomal protein</keyword>
<protein>
    <recommendedName>
        <fullName evidence="1">Large ribosomal subunit protein uL13</fullName>
    </recommendedName>
    <alternativeName>
        <fullName evidence="2">50S ribosomal protein L13</fullName>
    </alternativeName>
</protein>
<organism>
    <name type="scientific">Caldanaerobacter subterraneus subsp. tengcongensis (strain DSM 15242 / JCM 11007 / NBRC 100824 / MB4)</name>
    <name type="common">Thermoanaerobacter tengcongensis</name>
    <dbReference type="NCBI Taxonomy" id="273068"/>
    <lineage>
        <taxon>Bacteria</taxon>
        <taxon>Bacillati</taxon>
        <taxon>Bacillota</taxon>
        <taxon>Clostridia</taxon>
        <taxon>Thermoanaerobacterales</taxon>
        <taxon>Thermoanaerobacteraceae</taxon>
        <taxon>Caldanaerobacter</taxon>
    </lineage>
</organism>
<sequence>MKSYMAKPSDVERKWFVIDAEGKVLGRLASQIAKILMGKHKPTYTPHVDTGDFVVVINADKVVLTGKKLEDKYYKYYTGYPGGLKQIQYKKLMQTKPEFVIYHAVKGMLPKNRLGRRMIKRLKVYRGAEHKHQAQKPEKLDIE</sequence>
<comment type="function">
    <text evidence="1">This protein is one of the early assembly proteins of the 50S ribosomal subunit, although it is not seen to bind rRNA by itself. It is important during the early stages of 50S assembly.</text>
</comment>
<comment type="subunit">
    <text evidence="1">Part of the 50S ribosomal subunit.</text>
</comment>
<comment type="similarity">
    <text evidence="1">Belongs to the universal ribosomal protein uL13 family.</text>
</comment>
<feature type="chain" id="PRO_0000261814" description="Large ribosomal subunit protein uL13">
    <location>
        <begin position="1"/>
        <end position="143"/>
    </location>
</feature>
<dbReference type="EMBL" id="AE008691">
    <property type="protein sequence ID" value="AAM25401.1"/>
    <property type="molecule type" value="Genomic_DNA"/>
</dbReference>
<dbReference type="RefSeq" id="WP_011026304.1">
    <property type="nucleotide sequence ID" value="NZ_JANUCV010000001.1"/>
</dbReference>
<dbReference type="SMR" id="Q8R7Y8"/>
<dbReference type="STRING" id="273068.TTE2257"/>
<dbReference type="KEGG" id="tte:TTE2257"/>
<dbReference type="eggNOG" id="COG0102">
    <property type="taxonomic scope" value="Bacteria"/>
</dbReference>
<dbReference type="HOGENOM" id="CLU_082184_2_2_9"/>
<dbReference type="OrthoDB" id="9801330at2"/>
<dbReference type="Proteomes" id="UP000000555">
    <property type="component" value="Chromosome"/>
</dbReference>
<dbReference type="GO" id="GO:0022625">
    <property type="term" value="C:cytosolic large ribosomal subunit"/>
    <property type="evidence" value="ECO:0007669"/>
    <property type="project" value="TreeGrafter"/>
</dbReference>
<dbReference type="GO" id="GO:0003729">
    <property type="term" value="F:mRNA binding"/>
    <property type="evidence" value="ECO:0007669"/>
    <property type="project" value="TreeGrafter"/>
</dbReference>
<dbReference type="GO" id="GO:0003735">
    <property type="term" value="F:structural constituent of ribosome"/>
    <property type="evidence" value="ECO:0007669"/>
    <property type="project" value="InterPro"/>
</dbReference>
<dbReference type="GO" id="GO:0017148">
    <property type="term" value="P:negative regulation of translation"/>
    <property type="evidence" value="ECO:0007669"/>
    <property type="project" value="TreeGrafter"/>
</dbReference>
<dbReference type="GO" id="GO:0006412">
    <property type="term" value="P:translation"/>
    <property type="evidence" value="ECO:0007669"/>
    <property type="project" value="UniProtKB-UniRule"/>
</dbReference>
<dbReference type="CDD" id="cd00392">
    <property type="entry name" value="Ribosomal_L13"/>
    <property type="match status" value="1"/>
</dbReference>
<dbReference type="FunFam" id="3.90.1180.10:FF:000001">
    <property type="entry name" value="50S ribosomal protein L13"/>
    <property type="match status" value="1"/>
</dbReference>
<dbReference type="Gene3D" id="3.90.1180.10">
    <property type="entry name" value="Ribosomal protein L13"/>
    <property type="match status" value="1"/>
</dbReference>
<dbReference type="HAMAP" id="MF_01366">
    <property type="entry name" value="Ribosomal_uL13"/>
    <property type="match status" value="1"/>
</dbReference>
<dbReference type="InterPro" id="IPR005822">
    <property type="entry name" value="Ribosomal_uL13"/>
</dbReference>
<dbReference type="InterPro" id="IPR005823">
    <property type="entry name" value="Ribosomal_uL13_bac-type"/>
</dbReference>
<dbReference type="InterPro" id="IPR023563">
    <property type="entry name" value="Ribosomal_uL13_CS"/>
</dbReference>
<dbReference type="InterPro" id="IPR036899">
    <property type="entry name" value="Ribosomal_uL13_sf"/>
</dbReference>
<dbReference type="NCBIfam" id="TIGR01066">
    <property type="entry name" value="rplM_bact"/>
    <property type="match status" value="1"/>
</dbReference>
<dbReference type="PANTHER" id="PTHR11545:SF2">
    <property type="entry name" value="LARGE RIBOSOMAL SUBUNIT PROTEIN UL13M"/>
    <property type="match status" value="1"/>
</dbReference>
<dbReference type="PANTHER" id="PTHR11545">
    <property type="entry name" value="RIBOSOMAL PROTEIN L13"/>
    <property type="match status" value="1"/>
</dbReference>
<dbReference type="Pfam" id="PF00572">
    <property type="entry name" value="Ribosomal_L13"/>
    <property type="match status" value="1"/>
</dbReference>
<dbReference type="PIRSF" id="PIRSF002181">
    <property type="entry name" value="Ribosomal_L13"/>
    <property type="match status" value="1"/>
</dbReference>
<dbReference type="SUPFAM" id="SSF52161">
    <property type="entry name" value="Ribosomal protein L13"/>
    <property type="match status" value="1"/>
</dbReference>
<dbReference type="PROSITE" id="PS00783">
    <property type="entry name" value="RIBOSOMAL_L13"/>
    <property type="match status" value="1"/>
</dbReference>
<evidence type="ECO:0000255" key="1">
    <source>
        <dbReference type="HAMAP-Rule" id="MF_01366"/>
    </source>
</evidence>
<evidence type="ECO:0000305" key="2"/>
<accession>Q8R7Y8</accession>
<name>RL13_CALS4</name>
<proteinExistence type="inferred from homology"/>